<evidence type="ECO:0000255" key="1">
    <source>
        <dbReference type="HAMAP-Rule" id="MF_00265"/>
    </source>
</evidence>
<evidence type="ECO:0000269" key="2">
    <source>
    </source>
</evidence>
<proteinExistence type="evidence at protein level"/>
<reference key="1">
    <citation type="journal article" date="1998" name="Nature">
        <title>Deciphering the biology of Mycobacterium tuberculosis from the complete genome sequence.</title>
        <authorList>
            <person name="Cole S.T."/>
            <person name="Brosch R."/>
            <person name="Parkhill J."/>
            <person name="Garnier T."/>
            <person name="Churcher C.M."/>
            <person name="Harris D.E."/>
            <person name="Gordon S.V."/>
            <person name="Eiglmeier K."/>
            <person name="Gas S."/>
            <person name="Barry C.E. III"/>
            <person name="Tekaia F."/>
            <person name="Badcock K."/>
            <person name="Basham D."/>
            <person name="Brown D."/>
            <person name="Chillingworth T."/>
            <person name="Connor R."/>
            <person name="Davies R.M."/>
            <person name="Devlin K."/>
            <person name="Feltwell T."/>
            <person name="Gentles S."/>
            <person name="Hamlin N."/>
            <person name="Holroyd S."/>
            <person name="Hornsby T."/>
            <person name="Jagels K."/>
            <person name="Krogh A."/>
            <person name="McLean J."/>
            <person name="Moule S."/>
            <person name="Murphy L.D."/>
            <person name="Oliver S."/>
            <person name="Osborne J."/>
            <person name="Quail M.A."/>
            <person name="Rajandream M.A."/>
            <person name="Rogers J."/>
            <person name="Rutter S."/>
            <person name="Seeger K."/>
            <person name="Skelton S."/>
            <person name="Squares S."/>
            <person name="Squares R."/>
            <person name="Sulston J.E."/>
            <person name="Taylor K."/>
            <person name="Whitehead S."/>
            <person name="Barrell B.G."/>
        </authorList>
    </citation>
    <scope>NUCLEOTIDE SEQUENCE [LARGE SCALE GENOMIC DNA]</scope>
    <source>
        <strain>ATCC 25618 / H37Rv</strain>
    </source>
</reference>
<reference key="2">
    <citation type="journal article" date="2009" name="PLoS Genet.">
        <title>Comprehensive functional analysis of Mycobacterium tuberculosis toxin-antitoxin systems: implications for pathogenesis, stress responses, and evolution.</title>
        <authorList>
            <person name="Ramage H.R."/>
            <person name="Connolly L.E."/>
            <person name="Cox J.S."/>
        </authorList>
    </citation>
    <scope>EXPRESSION IN M.SMEGMATIS</scope>
    <scope>FUNCTION AS A TOXIN</scope>
    <source>
        <strain>ATCC 35801 / TMC 107 / Erdman</strain>
    </source>
</reference>
<reference key="3">
    <citation type="journal article" date="2011" name="Mol. Cell. Proteomics">
        <title>Proteogenomic analysis of Mycobacterium tuberculosis by high resolution mass spectrometry.</title>
        <authorList>
            <person name="Kelkar D.S."/>
            <person name="Kumar D."/>
            <person name="Kumar P."/>
            <person name="Balakrishnan L."/>
            <person name="Muthusamy B."/>
            <person name="Yadav A.K."/>
            <person name="Shrivastava P."/>
            <person name="Marimuthu A."/>
            <person name="Anand S."/>
            <person name="Sundaram H."/>
            <person name="Kingsbury R."/>
            <person name="Harsha H.C."/>
            <person name="Nair B."/>
            <person name="Prasad T.S."/>
            <person name="Chauhan D.S."/>
            <person name="Katoch K."/>
            <person name="Katoch V.M."/>
            <person name="Kumar P."/>
            <person name="Chaerkady R."/>
            <person name="Ramachandran S."/>
            <person name="Dash D."/>
            <person name="Pandey A."/>
        </authorList>
    </citation>
    <scope>IDENTIFICATION BY MASS SPECTROMETRY [LARGE SCALE ANALYSIS]</scope>
    <source>
        <strain>ATCC 25618 / H37Rv</strain>
    </source>
</reference>
<comment type="function">
    <text evidence="1 2">Toxic component of a type II toxin-antitoxin (TA) system. An RNase (By similarity). Upon expression in M.smegmatis inhibits colony formation. Its toxic effect is neutralized by coexpression with cognate antitoxin VapB33.</text>
</comment>
<comment type="cofactor">
    <cofactor evidence="1">
        <name>Mg(2+)</name>
        <dbReference type="ChEBI" id="CHEBI:18420"/>
    </cofactor>
</comment>
<comment type="similarity">
    <text evidence="1">Belongs to the PINc/VapC protein family.</text>
</comment>
<feature type="chain" id="PRO_0000407890" description="Ribonuclease VapC33">
    <location>
        <begin position="1"/>
        <end position="143"/>
    </location>
</feature>
<feature type="binding site" evidence="1">
    <location>
        <position position="5"/>
    </location>
    <ligand>
        <name>Mg(2+)</name>
        <dbReference type="ChEBI" id="CHEBI:18420"/>
    </ligand>
</feature>
<feature type="binding site" evidence="1">
    <location>
        <position position="108"/>
    </location>
    <ligand>
        <name>Mg(2+)</name>
        <dbReference type="ChEBI" id="CHEBI:18420"/>
    </ligand>
</feature>
<protein>
    <recommendedName>
        <fullName evidence="1">Ribonuclease VapC33</fullName>
        <shortName evidence="1">RNase VapC33</shortName>
        <ecNumber evidence="1">3.1.-.-</ecNumber>
    </recommendedName>
    <alternativeName>
        <fullName evidence="1">Toxin VapC33</fullName>
    </alternativeName>
</protein>
<sequence>MIIPDINLLLYAVITGFPQHRRAHAWWQDTVNGHTRIGLTYPALFGFLRIATSARVLAAPLPTADAIAYVREWLSQPNVDLLTAGPRHLDIALGLLDKLGTASHLTTDVQLAAYGIEYDAEIHSSDTDFARFADLKWTDPLRE</sequence>
<keyword id="KW-0378">Hydrolase</keyword>
<keyword id="KW-0460">Magnesium</keyword>
<keyword id="KW-0479">Metal-binding</keyword>
<keyword id="KW-0540">Nuclease</keyword>
<keyword id="KW-1185">Reference proteome</keyword>
<keyword id="KW-1277">Toxin-antitoxin system</keyword>
<organism>
    <name type="scientific">Mycobacterium tuberculosis (strain ATCC 25618 / H37Rv)</name>
    <dbReference type="NCBI Taxonomy" id="83332"/>
    <lineage>
        <taxon>Bacteria</taxon>
        <taxon>Bacillati</taxon>
        <taxon>Actinomycetota</taxon>
        <taxon>Actinomycetes</taxon>
        <taxon>Mycobacteriales</taxon>
        <taxon>Mycobacteriaceae</taxon>
        <taxon>Mycobacterium</taxon>
        <taxon>Mycobacterium tuberculosis complex</taxon>
    </lineage>
</organism>
<gene>
    <name evidence="1" type="primary">vapC33</name>
    <name type="ordered locus">Rv1242</name>
</gene>
<accession>P9WF69</accession>
<accession>L0T924</accession>
<accession>O50457</accession>
<accession>Q7D8J3</accession>
<name>VPC33_MYCTU</name>
<dbReference type="EC" id="3.1.-.-" evidence="1"/>
<dbReference type="EMBL" id="AL123456">
    <property type="protein sequence ID" value="CCP43998.1"/>
    <property type="molecule type" value="Genomic_DNA"/>
</dbReference>
<dbReference type="PIR" id="A70953">
    <property type="entry name" value="A70953"/>
</dbReference>
<dbReference type="RefSeq" id="NP_215758.1">
    <property type="nucleotide sequence ID" value="NC_000962.3"/>
</dbReference>
<dbReference type="RefSeq" id="WP_003406304.1">
    <property type="nucleotide sequence ID" value="NZ_NVQJ01000039.1"/>
</dbReference>
<dbReference type="SMR" id="P9WF69"/>
<dbReference type="STRING" id="83332.Rv1242"/>
<dbReference type="PaxDb" id="83332-Rv1242"/>
<dbReference type="DNASU" id="887095"/>
<dbReference type="GeneID" id="887095"/>
<dbReference type="KEGG" id="mtu:Rv1242"/>
<dbReference type="KEGG" id="mtv:RVBD_1242"/>
<dbReference type="TubercuList" id="Rv1242"/>
<dbReference type="eggNOG" id="COG1848">
    <property type="taxonomic scope" value="Bacteria"/>
</dbReference>
<dbReference type="InParanoid" id="P9WF69"/>
<dbReference type="OrthoDB" id="556169at2"/>
<dbReference type="PhylomeDB" id="P9WF69"/>
<dbReference type="Proteomes" id="UP000001584">
    <property type="component" value="Chromosome"/>
</dbReference>
<dbReference type="GO" id="GO:0005886">
    <property type="term" value="C:plasma membrane"/>
    <property type="evidence" value="ECO:0007005"/>
    <property type="project" value="MTBBASE"/>
</dbReference>
<dbReference type="GO" id="GO:0000287">
    <property type="term" value="F:magnesium ion binding"/>
    <property type="evidence" value="ECO:0007669"/>
    <property type="project" value="UniProtKB-UniRule"/>
</dbReference>
<dbReference type="GO" id="GO:0004540">
    <property type="term" value="F:RNA nuclease activity"/>
    <property type="evidence" value="ECO:0007669"/>
    <property type="project" value="InterPro"/>
</dbReference>
<dbReference type="GO" id="GO:0045926">
    <property type="term" value="P:negative regulation of growth"/>
    <property type="evidence" value="ECO:0000315"/>
    <property type="project" value="MTBBASE"/>
</dbReference>
<dbReference type="CDD" id="cd18678">
    <property type="entry name" value="PIN_MtVapC25_VapC33-like"/>
    <property type="match status" value="1"/>
</dbReference>
<dbReference type="HAMAP" id="MF_00265">
    <property type="entry name" value="VapC_Nob1"/>
    <property type="match status" value="1"/>
</dbReference>
<dbReference type="InterPro" id="IPR006226">
    <property type="entry name" value="Mtu_PIN"/>
</dbReference>
<dbReference type="InterPro" id="IPR029060">
    <property type="entry name" value="PIN-like_dom_sf"/>
</dbReference>
<dbReference type="InterPro" id="IPR002716">
    <property type="entry name" value="PIN_dom"/>
</dbReference>
<dbReference type="InterPro" id="IPR022907">
    <property type="entry name" value="VapC_family"/>
</dbReference>
<dbReference type="NCBIfam" id="TIGR00028">
    <property type="entry name" value="Mtu_PIN_fam"/>
    <property type="match status" value="1"/>
</dbReference>
<dbReference type="Pfam" id="PF01850">
    <property type="entry name" value="PIN"/>
    <property type="match status" value="1"/>
</dbReference>
<dbReference type="SUPFAM" id="SSF88723">
    <property type="entry name" value="PIN domain-like"/>
    <property type="match status" value="1"/>
</dbReference>